<comment type="function">
    <text evidence="6">May contribute to coordination of muscle contraction as regulatory subunit of the nonessential sup-9 potassium channel complex. May act downstream of sup-10.</text>
</comment>
<comment type="cofactor">
    <cofactor evidence="1">
        <name>FMN</name>
        <dbReference type="ChEBI" id="CHEBI:58210"/>
    </cofactor>
</comment>
<comment type="subcellular location">
    <subcellularLocation>
        <location evidence="3">Membrane</location>
        <topology evidence="6">Single-pass membrane protein</topology>
    </subcellularLocation>
    <text evidence="3">In body-wall muscle cells, localizes to dense body-like structures which connect the myofibril lattice to the cell membrane. Colocalizes with sup-10. Membrane localization is not essential for its activity.</text>
</comment>
<comment type="tissue specificity">
    <text evidence="3">Expressed in body-wall, anal depressor and vulval muscles.</text>
</comment>
<comment type="disruption phenotype">
    <text evidence="3">No visible phenotype. Fully suppresses the rubber band uncoordinated phenotype in gain of function (gf) mutants of sup-10 but only slightly in gf mutants of sup-9 and unc-93.</text>
</comment>
<comment type="similarity">
    <text evidence="5">Belongs to the nitroreductase family.</text>
</comment>
<dbReference type="EC" id="1.21.1.-" evidence="6"/>
<dbReference type="EMBL" id="JX978835">
    <property type="protein sequence ID" value="AGC39147.1"/>
    <property type="molecule type" value="mRNA"/>
</dbReference>
<dbReference type="EMBL" id="FO080276">
    <property type="protein sequence ID" value="CCD62530.2"/>
    <property type="molecule type" value="Genomic_DNA"/>
</dbReference>
<dbReference type="PIR" id="S44738">
    <property type="entry name" value="S44738"/>
</dbReference>
<dbReference type="RefSeq" id="NP_498712.3">
    <property type="nucleotide sequence ID" value="NM_066311.6"/>
</dbReference>
<dbReference type="SMR" id="P34273"/>
<dbReference type="FunCoup" id="P34273">
    <property type="interactions" value="16"/>
</dbReference>
<dbReference type="STRING" id="6239.C02C2.5.1"/>
<dbReference type="PaxDb" id="6239-C02C2.5"/>
<dbReference type="EnsemblMetazoa" id="C02C2.5.1">
    <property type="protein sequence ID" value="C02C2.5.1"/>
    <property type="gene ID" value="WBGene00015334"/>
</dbReference>
<dbReference type="GeneID" id="182108"/>
<dbReference type="KEGG" id="cel:CELE_C02C2.5"/>
<dbReference type="UCSC" id="C02C2.5">
    <property type="organism name" value="c. elegans"/>
</dbReference>
<dbReference type="AGR" id="WB:WBGene00015334"/>
<dbReference type="CTD" id="182108"/>
<dbReference type="WormBase" id="C02C2.5">
    <property type="protein sequence ID" value="CE49662"/>
    <property type="gene ID" value="WBGene00015334"/>
    <property type="gene designation" value="sup-18"/>
</dbReference>
<dbReference type="eggNOG" id="KOG3936">
    <property type="taxonomic scope" value="Eukaryota"/>
</dbReference>
<dbReference type="GeneTree" id="ENSGT00390000004348"/>
<dbReference type="HOGENOM" id="CLU_070764_1_0_1"/>
<dbReference type="InParanoid" id="P34273"/>
<dbReference type="OMA" id="GANHQPW"/>
<dbReference type="OrthoDB" id="41362at2759"/>
<dbReference type="Reactome" id="R-CEL-209968">
    <property type="pathway name" value="Thyroxine biosynthesis"/>
</dbReference>
<dbReference type="PRO" id="PR:P34273"/>
<dbReference type="Proteomes" id="UP000001940">
    <property type="component" value="Chromosome III"/>
</dbReference>
<dbReference type="Bgee" id="WBGene00015334">
    <property type="expression patterns" value="Expressed in larva and 3 other cell types or tissues"/>
</dbReference>
<dbReference type="GO" id="GO:0005886">
    <property type="term" value="C:plasma membrane"/>
    <property type="evidence" value="ECO:0000318"/>
    <property type="project" value="GO_Central"/>
</dbReference>
<dbReference type="GO" id="GO:0140616">
    <property type="term" value="F:iodotyrosine deiodinase activity"/>
    <property type="evidence" value="ECO:0007669"/>
    <property type="project" value="UniProtKB-ARBA"/>
</dbReference>
<dbReference type="GO" id="GO:0016491">
    <property type="term" value="F:oxidoreductase activity"/>
    <property type="evidence" value="ECO:0000318"/>
    <property type="project" value="GO_Central"/>
</dbReference>
<dbReference type="GO" id="GO:0006813">
    <property type="term" value="P:potassium ion transport"/>
    <property type="evidence" value="ECO:0007669"/>
    <property type="project" value="UniProtKB-KW"/>
</dbReference>
<dbReference type="GO" id="GO:0006570">
    <property type="term" value="P:tyrosine metabolic process"/>
    <property type="evidence" value="ECO:0000318"/>
    <property type="project" value="GO_Central"/>
</dbReference>
<dbReference type="CDD" id="cd02144">
    <property type="entry name" value="iodotyrosine_dehalogenase"/>
    <property type="match status" value="1"/>
</dbReference>
<dbReference type="FunFam" id="3.40.109.10:FF:000004">
    <property type="entry name" value="Iodotyrosine deiodinase 1"/>
    <property type="match status" value="1"/>
</dbReference>
<dbReference type="Gene3D" id="3.40.109.10">
    <property type="entry name" value="NADH Oxidase"/>
    <property type="match status" value="1"/>
</dbReference>
<dbReference type="InterPro" id="IPR029479">
    <property type="entry name" value="Nitroreductase"/>
</dbReference>
<dbReference type="InterPro" id="IPR000415">
    <property type="entry name" value="Nitroreductase-like"/>
</dbReference>
<dbReference type="InterPro" id="IPR050627">
    <property type="entry name" value="Nitroreductase/BluB"/>
</dbReference>
<dbReference type="PANTHER" id="PTHR23026:SF90">
    <property type="entry name" value="IODOTYROSINE DEIODINASE 1"/>
    <property type="match status" value="1"/>
</dbReference>
<dbReference type="PANTHER" id="PTHR23026">
    <property type="entry name" value="NADPH NITROREDUCTASE"/>
    <property type="match status" value="1"/>
</dbReference>
<dbReference type="Pfam" id="PF00881">
    <property type="entry name" value="Nitroreductase"/>
    <property type="match status" value="1"/>
</dbReference>
<dbReference type="SUPFAM" id="SSF55469">
    <property type="entry name" value="FMN-dependent nitroreductase-like"/>
    <property type="match status" value="1"/>
</dbReference>
<feature type="chain" id="PRO_0000065104" description="Iodotyrosine dehalogenase 1 homolog">
    <location>
        <begin position="1"/>
        <end position="325"/>
    </location>
</feature>
<feature type="transmembrane region" description="Helical" evidence="2">
    <location>
        <begin position="42"/>
        <end position="62"/>
    </location>
</feature>
<feature type="topological domain" description="Cytoplasmic" evidence="3">
    <location>
        <begin position="63"/>
        <end position="325"/>
    </location>
</feature>
<feature type="binding site" evidence="1">
    <location>
        <begin position="135"/>
        <end position="139"/>
    </location>
    <ligand>
        <name>FMN</name>
        <dbReference type="ChEBI" id="CHEBI:58210"/>
    </ligand>
</feature>
<feature type="binding site" evidence="1">
    <location>
        <begin position="163"/>
        <end position="164"/>
    </location>
    <ligand>
        <name>FMN</name>
        <dbReference type="ChEBI" id="CHEBI:58210"/>
    </ligand>
</feature>
<feature type="binding site" evidence="1">
    <location>
        <begin position="273"/>
        <end position="275"/>
    </location>
    <ligand>
        <name>FMN</name>
        <dbReference type="ChEBI" id="CHEBI:58210"/>
    </ligand>
</feature>
<feature type="binding site" evidence="1">
    <location>
        <position position="315"/>
    </location>
    <ligand>
        <name>FMN</name>
        <dbReference type="ChEBI" id="CHEBI:58210"/>
    </ligand>
</feature>
<feature type="mutagenesis site" description="In n1010; loss of function." evidence="3">
    <original>S</original>
    <variation>N</variation>
    <location>
        <position position="137"/>
    </location>
</feature>
<feature type="mutagenesis site" description="In n1554; loss of function." evidence="3">
    <original>G</original>
    <variation>D</variation>
    <location>
        <position position="258"/>
    </location>
</feature>
<feature type="mutagenesis site" description="In n1471; loss of function." evidence="3">
    <original>G</original>
    <variation>S</variation>
    <location>
        <position position="258"/>
    </location>
</feature>
<feature type="mutagenesis site" description="In n1556; loss of function." evidence="3">
    <original>T</original>
    <variation>I</variation>
    <location>
        <position position="271"/>
    </location>
</feature>
<feature type="mutagenesis site" description="In n1014; loss of function." evidence="3">
    <original>G</original>
    <variation>R</variation>
    <location>
        <position position="280"/>
    </location>
</feature>
<feature type="mutagenesis site" description="In n1022; loss of function." evidence="3">
    <original>R</original>
    <variation>K</variation>
    <location>
        <position position="288"/>
    </location>
</feature>
<feature type="mutagenesis site" description="In n528; loss of function." evidence="3">
    <original>T</original>
    <variation>P</variation>
    <location>
        <position position="322"/>
    </location>
</feature>
<reference key="1">
    <citation type="journal article" date="2014" name="PLoS Genet.">
        <title>The Caenorhabditis elegans iodotyrosine deiodinase ortholog SUP-18 functions through a conserved channel SC-box to regulate the muscle two-pore domain potassium channel SUP-9.</title>
        <authorList>
            <person name="de la Cruz I.P."/>
            <person name="Ma L."/>
            <person name="Horvitz H.R."/>
        </authorList>
    </citation>
    <scope>NUCLEOTIDE SEQUENCE [MRNA]</scope>
    <scope>FUNCTION</scope>
    <scope>TISSUE SPECIFICITY</scope>
    <scope>SUBCELLULAR LOCATION</scope>
    <scope>TOPOLOGY</scope>
    <scope>DISRUPTION PHENOTYPE</scope>
    <scope>MUTAGENESIS OF SER-137; GLY-258; THR-271; GLY-280; ARG-288 AND THR-322</scope>
    <source>
        <strain evidence="7">Bristol N2</strain>
    </source>
</reference>
<reference key="2">
    <citation type="journal article" date="1994" name="Nature">
        <title>2.2 Mb of contiguous nucleotide sequence from chromosome III of C. elegans.</title>
        <authorList>
            <person name="Wilson R."/>
            <person name="Ainscough R."/>
            <person name="Anderson K."/>
            <person name="Baynes C."/>
            <person name="Berks M."/>
            <person name="Bonfield J."/>
            <person name="Burton J."/>
            <person name="Connell M."/>
            <person name="Copsey T."/>
            <person name="Cooper J."/>
            <person name="Coulson A."/>
            <person name="Craxton M."/>
            <person name="Dear S."/>
            <person name="Du Z."/>
            <person name="Durbin R."/>
            <person name="Favello A."/>
            <person name="Fraser A."/>
            <person name="Fulton L."/>
            <person name="Gardner A."/>
            <person name="Green P."/>
            <person name="Hawkins T."/>
            <person name="Hillier L."/>
            <person name="Jier M."/>
            <person name="Johnston L."/>
            <person name="Jones M."/>
            <person name="Kershaw J."/>
            <person name="Kirsten J."/>
            <person name="Laisster N."/>
            <person name="Latreille P."/>
            <person name="Lightning J."/>
            <person name="Lloyd C."/>
            <person name="Mortimore B."/>
            <person name="O'Callaghan M."/>
            <person name="Parsons J."/>
            <person name="Percy C."/>
            <person name="Rifken L."/>
            <person name="Roopra A."/>
            <person name="Saunders D."/>
            <person name="Shownkeen R."/>
            <person name="Sims M."/>
            <person name="Smaldon N."/>
            <person name="Smith A."/>
            <person name="Smith M."/>
            <person name="Sonnhammer E."/>
            <person name="Staden R."/>
            <person name="Sulston J."/>
            <person name="Thierry-Mieg J."/>
            <person name="Thomas K."/>
            <person name="Vaudin M."/>
            <person name="Vaughan K."/>
            <person name="Waterston R."/>
            <person name="Watson A."/>
            <person name="Weinstock L."/>
            <person name="Wilkinson-Sproat J."/>
            <person name="Wohldman P."/>
        </authorList>
    </citation>
    <scope>NUCLEOTIDE SEQUENCE [LARGE SCALE GENOMIC DNA]</scope>
    <source>
        <strain>Bristol N2</strain>
    </source>
</reference>
<reference key="3">
    <citation type="journal article" date="1998" name="Science">
        <title>Genome sequence of the nematode C. elegans: a platform for investigating biology.</title>
        <authorList>
            <consortium name="The C. elegans sequencing consortium"/>
        </authorList>
    </citation>
    <scope>NUCLEOTIDE SEQUENCE [LARGE SCALE GENOMIC DNA]</scope>
    <source>
        <strain>Bristol N2</strain>
    </source>
</reference>
<evidence type="ECO:0000250" key="1">
    <source>
        <dbReference type="UniProtKB" id="Q9DCX8"/>
    </source>
</evidence>
<evidence type="ECO:0000255" key="2"/>
<evidence type="ECO:0000269" key="3">
    <source>
    </source>
</evidence>
<evidence type="ECO:0000303" key="4">
    <source>
    </source>
</evidence>
<evidence type="ECO:0000305" key="5"/>
<evidence type="ECO:0000305" key="6">
    <source>
    </source>
</evidence>
<evidence type="ECO:0000312" key="7">
    <source>
        <dbReference type="EMBL" id="AGC39147.1"/>
    </source>
</evidence>
<evidence type="ECO:0000312" key="8">
    <source>
        <dbReference type="WormBase" id="C02C2.5"/>
    </source>
</evidence>
<accession>P34273</accession>
<accession>L7TUZ3</accession>
<organism>
    <name type="scientific">Caenorhabditis elegans</name>
    <dbReference type="NCBI Taxonomy" id="6239"/>
    <lineage>
        <taxon>Eukaryota</taxon>
        <taxon>Metazoa</taxon>
        <taxon>Ecdysozoa</taxon>
        <taxon>Nematoda</taxon>
        <taxon>Chromadorea</taxon>
        <taxon>Rhabditida</taxon>
        <taxon>Rhabditina</taxon>
        <taxon>Rhabditomorpha</taxon>
        <taxon>Rhabditoidea</taxon>
        <taxon>Rhabditidae</taxon>
        <taxon>Peloderinae</taxon>
        <taxon>Caenorhabditis</taxon>
    </lineage>
</organism>
<name>IYD1H_CAEEL</name>
<protein>
    <recommendedName>
        <fullName evidence="4">Iodotyrosine dehalogenase 1 homolog</fullName>
        <shortName evidence="4">IYD-1</shortName>
        <ecNumber evidence="6">1.21.1.-</ecNumber>
    </recommendedName>
</protein>
<sequence length="325" mass="37261">MKKHTHHKAYGDSTGKEPLIDLQSIKLWLNSFGNQGHSSEAVLNVLFTLGVILFVIYQVASLLHRMNKRVEKQLESRTKQRKVEVADKHVGDEMVFTDLHENVIRERMIPYRMPVINDDITLRNSQIFYEEMKMRRSCRQFSSRDVPLKVIQNLLKTAGTSPSVGNLQPWTFCVVSSDSIKTMIRKILEADERDNYVSRKKGASWVVDVSQLQDTWRRPYITDAPYLLIVCHEIFRDVHSKTERVFHYNQISTSIAVGILLAAIQNVGLSTVVTSPLNAGPDISRILRRPENESILLLLPLGYASEDVLVPDLKRKPVEHITKLY</sequence>
<gene>
    <name evidence="8" type="primary">sup-18</name>
    <name evidence="8" type="ORF">C02C2.5</name>
</gene>
<proteinExistence type="evidence at protein level"/>
<keyword id="KW-0285">Flavoprotein</keyword>
<keyword id="KW-0288">FMN</keyword>
<keyword id="KW-0406">Ion transport</keyword>
<keyword id="KW-0472">Membrane</keyword>
<keyword id="KW-0560">Oxidoreductase</keyword>
<keyword id="KW-0630">Potassium</keyword>
<keyword id="KW-0633">Potassium transport</keyword>
<keyword id="KW-1185">Reference proteome</keyword>
<keyword id="KW-0812">Transmembrane</keyword>
<keyword id="KW-1133">Transmembrane helix</keyword>
<keyword id="KW-0813">Transport</keyword>